<protein>
    <recommendedName>
        <fullName evidence="1">Protein Vpr</fullName>
    </recommendedName>
    <alternativeName>
        <fullName evidence="1">R ORF protein</fullName>
    </alternativeName>
    <alternativeName>
        <fullName evidence="1">Viral protein R</fullName>
    </alternativeName>
</protein>
<proteinExistence type="inferred from homology"/>
<keyword id="KW-0010">Activator</keyword>
<keyword id="KW-0014">AIDS</keyword>
<keyword id="KW-0053">Apoptosis</keyword>
<keyword id="KW-0131">Cell cycle</keyword>
<keyword id="KW-1079">Host G2/M cell cycle arrest by virus</keyword>
<keyword id="KW-1048">Host nucleus</keyword>
<keyword id="KW-0945">Host-virus interaction</keyword>
<keyword id="KW-0407">Ion channel</keyword>
<keyword id="KW-0406">Ion transport</keyword>
<keyword id="KW-1121">Modulation of host cell cycle by virus</keyword>
<keyword id="KW-0597">Phosphoprotein</keyword>
<keyword id="KW-0804">Transcription</keyword>
<keyword id="KW-0805">Transcription regulation</keyword>
<keyword id="KW-0813">Transport</keyword>
<keyword id="KW-1163">Viral penetration into host nucleus</keyword>
<keyword id="KW-0946">Virion</keyword>
<keyword id="KW-1160">Virus entry into host cell</keyword>
<organism>
    <name type="scientific">Human immunodeficiency virus type 1 group M subtype K (isolate 96CM-MP535)</name>
    <name type="common">HIV-1</name>
    <dbReference type="NCBI Taxonomy" id="388906"/>
    <lineage>
        <taxon>Viruses</taxon>
        <taxon>Riboviria</taxon>
        <taxon>Pararnavirae</taxon>
        <taxon>Artverviricota</taxon>
        <taxon>Revtraviricetes</taxon>
        <taxon>Ortervirales</taxon>
        <taxon>Retroviridae</taxon>
        <taxon>Orthoretrovirinae</taxon>
        <taxon>Lentivirus</taxon>
        <taxon>Human immunodeficiency virus type 1</taxon>
    </lineage>
</organism>
<evidence type="ECO:0000255" key="1">
    <source>
        <dbReference type="HAMAP-Rule" id="MF_04080"/>
    </source>
</evidence>
<organismHost>
    <name type="scientific">Homo sapiens</name>
    <name type="common">Human</name>
    <dbReference type="NCBI Taxonomy" id="9606"/>
</organismHost>
<gene>
    <name evidence="1" type="primary">vpr</name>
</gene>
<sequence length="96" mass="11377">MEQAPEDQGPQREPNNEWTLEILEELKREAVRHFPRPWLHNLGQHIYTTYGDTWEGLEAIIRILQQLLFIHFRIGCHHSRIGIIPQRRGRNGSSRS</sequence>
<dbReference type="EMBL" id="AJ249239">
    <property type="status" value="NOT_ANNOTATED_CDS"/>
    <property type="molecule type" value="Genomic_RNA"/>
</dbReference>
<dbReference type="SMR" id="P0C1P2"/>
<dbReference type="Proteomes" id="UP000101651">
    <property type="component" value="Segment"/>
</dbReference>
<dbReference type="GO" id="GO:0043657">
    <property type="term" value="C:host cell"/>
    <property type="evidence" value="ECO:0007669"/>
    <property type="project" value="GOC"/>
</dbReference>
<dbReference type="GO" id="GO:0042025">
    <property type="term" value="C:host cell nucleus"/>
    <property type="evidence" value="ECO:0007669"/>
    <property type="project" value="UniProtKB-SubCell"/>
</dbReference>
<dbReference type="GO" id="GO:0043655">
    <property type="term" value="C:host extracellular space"/>
    <property type="evidence" value="ECO:0007669"/>
    <property type="project" value="UniProtKB-SubCell"/>
</dbReference>
<dbReference type="GO" id="GO:0044423">
    <property type="term" value="C:virion component"/>
    <property type="evidence" value="ECO:0007669"/>
    <property type="project" value="UniProtKB-UniRule"/>
</dbReference>
<dbReference type="GO" id="GO:0006351">
    <property type="term" value="P:DNA-templated transcription"/>
    <property type="evidence" value="ECO:0007669"/>
    <property type="project" value="UniProtKB-UniRule"/>
</dbReference>
<dbReference type="GO" id="GO:0034220">
    <property type="term" value="P:monoatomic ion transmembrane transport"/>
    <property type="evidence" value="ECO:0007669"/>
    <property type="project" value="UniProtKB-KW"/>
</dbReference>
<dbReference type="GO" id="GO:0051260">
    <property type="term" value="P:protein homooligomerization"/>
    <property type="evidence" value="ECO:0007669"/>
    <property type="project" value="UniProtKB-UniRule"/>
</dbReference>
<dbReference type="GO" id="GO:0006355">
    <property type="term" value="P:regulation of DNA-templated transcription"/>
    <property type="evidence" value="ECO:0007669"/>
    <property type="project" value="UniProtKB-UniRule"/>
</dbReference>
<dbReference type="GO" id="GO:0046718">
    <property type="term" value="P:symbiont entry into host cell"/>
    <property type="evidence" value="ECO:0007669"/>
    <property type="project" value="UniProtKB-KW"/>
</dbReference>
<dbReference type="GO" id="GO:0052151">
    <property type="term" value="P:symbiont-mediated activation of host apoptosis"/>
    <property type="evidence" value="ECO:0007669"/>
    <property type="project" value="UniProtKB-UniRule"/>
</dbReference>
<dbReference type="GO" id="GO:0039592">
    <property type="term" value="P:symbiont-mediated arrest of host cell cycle during G2/M transition"/>
    <property type="evidence" value="ECO:0007669"/>
    <property type="project" value="UniProtKB-UniRule"/>
</dbReference>
<dbReference type="GO" id="GO:0075732">
    <property type="term" value="P:viral penetration into host nucleus"/>
    <property type="evidence" value="ECO:0007669"/>
    <property type="project" value="UniProtKB-UniRule"/>
</dbReference>
<dbReference type="Gene3D" id="6.10.210.10">
    <property type="match status" value="1"/>
</dbReference>
<dbReference type="Gene3D" id="1.20.5.90">
    <property type="entry name" value="VpR/VpX protein, C-terminal domain"/>
    <property type="match status" value="1"/>
</dbReference>
<dbReference type="HAMAP" id="MF_04080">
    <property type="entry name" value="HIV_VPR"/>
    <property type="match status" value="1"/>
</dbReference>
<dbReference type="InterPro" id="IPR000012">
    <property type="entry name" value="RetroV_VpR/X"/>
</dbReference>
<dbReference type="Pfam" id="PF00522">
    <property type="entry name" value="VPR"/>
    <property type="match status" value="1"/>
</dbReference>
<dbReference type="PRINTS" id="PR00444">
    <property type="entry name" value="HIVVPRVPX"/>
</dbReference>
<reference key="1">
    <citation type="journal article" date="2000" name="AIDS Res. Hum. Retroviruses">
        <title>Near-full-length genome sequencing of divergent African HIV type 1 subtype F viruses leads to the identification of a new HIV type 1 subtype designated K.</title>
        <authorList>
            <person name="Triques K."/>
            <person name="Bourgeois A."/>
            <person name="Vidale N."/>
            <person name="Mpoudi-Ngole E."/>
            <person name="Mulanga-Kabeya C."/>
            <person name="Nzilambi N."/>
            <person name="Torimiro N."/>
            <person name="Saman E."/>
            <person name="Delaporte E."/>
            <person name="Peeters M."/>
        </authorList>
    </citation>
    <scope>NUCLEOTIDE SEQUENCE [GENOMIC RNA]</scope>
</reference>
<name>VPR_HV196</name>
<comment type="function">
    <text evidence="1">During virus replication, may deplete host UNG protein, and incude G2-M cell cycle arrest. Acts by targeting specific host proteins for degradation by the 26S proteasome, through association with the cellular CUL4A-DDB1 E3 ligase complex by direct interaction with host VPRPB/DCAF-1. Cell cycle arrest reportedly occurs within hours of infection and is not blocked by antiviral agents, suggesting that it is initiated by the VPR carried into the virion. Additionally, VPR induces apoptosis in a cell cycle dependent manner suggesting that these two effects are mechanistically linked. Detected in the serum and cerebrospinal fluid of AIDS patient, VPR may also induce cell death to bystander cells.</text>
</comment>
<comment type="function">
    <text evidence="1">During virus entry, plays a role in the transport of the viral pre-integration (PIC) complex to the host nucleus. This function is crucial for viral infection of non-dividing macrophages. May act directly at the nuclear pore complex, by binding nucleoporins phenylalanine-glycine (FG)-repeat regions.</text>
</comment>
<comment type="subunit">
    <text evidence="1">Homooligomer, may form homodimer. Interacts with p6-gag region of the Pr55 Gag precursor protein through a (Leu-X-X)4 motif near the C-terminus of the P6gag protein. Interacts with host UNG. May interact with host RAD23A/HHR23A. Interacts with host VPRBP/DCAF1, leading to hijack the CUL4A-RBX1-DDB1-DCAF1/VPRBP complex, mediating ubiquitination of host proteins such as TERT and ZGPAT and arrest of the cell cycle in G2 phase.</text>
</comment>
<comment type="subcellular location">
    <subcellularLocation>
        <location evidence="1">Virion</location>
    </subcellularLocation>
    <subcellularLocation>
        <location evidence="1">Host nucleus</location>
    </subcellularLocation>
    <subcellularLocation>
        <location evidence="1">Host extracellular space</location>
    </subcellularLocation>
    <text evidence="1">Incorporation into virion is dependent on p6 GAG sequences. Lacks a canonical nuclear localization signal, thus import into nucleus may function independently of the human importin pathway. Detected in high quantity in the serum and cerebrospinal fluid of AIDS patient.</text>
</comment>
<comment type="PTM">
    <text evidence="1">Phosphorylated on several residues by host. These phosphorylations regulate VPR activity for the nuclear import of the HIV-1 pre-integration complex.</text>
</comment>
<comment type="miscellaneous">
    <text evidence="1">HIV-1 lineages are divided in three main groups, M (for Major), O (for Outlier), and N (for New, or Non-M, Non-O). The vast majority of strains found worldwide belong to the group M. Group O seems to be endemic to and largely confined to Cameroon and neighboring countries in West Central Africa, where these viruses represent a small minority of HIV-1 strains. The group N is represented by a limited number of isolates from Cameroonian persons. The group M is further subdivided in 9 clades or subtypes (A to D, F to H, J and K).</text>
</comment>
<comment type="similarity">
    <text evidence="1">Belongs to the HIV-1 VPR protein family.</text>
</comment>
<accession>P0C1P2</accession>
<feature type="chain" id="PRO_0000246755" description="Protein Vpr">
    <location>
        <begin position="1"/>
        <end position="96"/>
    </location>
</feature>
<feature type="region of interest" description="Homooligomerization" evidence="1">
    <location>
        <begin position="1"/>
        <end position="42"/>
    </location>
</feature>
<feature type="modified residue" description="Phosphoserine; by host" evidence="1">
    <location>
        <position position="79"/>
    </location>
</feature>
<feature type="modified residue" description="Phosphoserine; by host" evidence="1">
    <location>
        <position position="94"/>
    </location>
</feature>
<feature type="modified residue" description="Phosphoserine; by host" evidence="1">
    <location>
        <position position="96"/>
    </location>
</feature>